<protein>
    <recommendedName>
        <fullName>Autophagy-related protein 36</fullName>
    </recommendedName>
</protein>
<comment type="function">
    <text evidence="2 3">Required for autophagic breakdown of peroxisomes, called pexophagy, through linking peroxisomes to the autophagy apparatus. Involved in regulation of the glyoxylate cycle.</text>
</comment>
<comment type="subunit">
    <text evidence="3">Interacts with PEX3, ATG8 and ATG11.</text>
</comment>
<comment type="subcellular location">
    <subcellularLocation>
        <location evidence="3">Peroxisome</location>
    </subcellularLocation>
    <text>Recruited to peroxisomes by PEX3.</text>
</comment>
<feature type="chain" id="PRO_0000203020" description="Autophagy-related protein 36">
    <location>
        <begin position="1"/>
        <end position="293"/>
    </location>
</feature>
<feature type="region of interest" description="Disordered" evidence="1">
    <location>
        <begin position="98"/>
        <end position="121"/>
    </location>
</feature>
<feature type="region of interest" description="Disordered" evidence="1">
    <location>
        <begin position="250"/>
        <end position="273"/>
    </location>
</feature>
<feature type="compositionally biased region" description="Polar residues" evidence="1">
    <location>
        <begin position="98"/>
        <end position="108"/>
    </location>
</feature>
<feature type="compositionally biased region" description="Polar residues" evidence="1">
    <location>
        <begin position="260"/>
        <end position="273"/>
    </location>
</feature>
<evidence type="ECO:0000256" key="1">
    <source>
        <dbReference type="SAM" id="MobiDB-lite"/>
    </source>
</evidence>
<evidence type="ECO:0000269" key="2">
    <source>
    </source>
</evidence>
<evidence type="ECO:0000269" key="3">
    <source>
    </source>
</evidence>
<accession>P46983</accession>
<accession>D6VW05</accession>
<organism>
    <name type="scientific">Saccharomyces cerevisiae (strain ATCC 204508 / S288c)</name>
    <name type="common">Baker's yeast</name>
    <dbReference type="NCBI Taxonomy" id="559292"/>
    <lineage>
        <taxon>Eukaryota</taxon>
        <taxon>Fungi</taxon>
        <taxon>Dikarya</taxon>
        <taxon>Ascomycota</taxon>
        <taxon>Saccharomycotina</taxon>
        <taxon>Saccharomycetes</taxon>
        <taxon>Saccharomycetales</taxon>
        <taxon>Saccharomycetaceae</taxon>
        <taxon>Saccharomyces</taxon>
    </lineage>
</organism>
<gene>
    <name type="primary">ATG36</name>
    <name type="ordered locus">YJL185C</name>
    <name type="ORF">J0415</name>
</gene>
<proteinExistence type="evidence at protein level"/>
<keyword id="KW-0072">Autophagy</keyword>
<keyword id="KW-0576">Peroxisome</keyword>
<keyword id="KW-1185">Reference proteome</keyword>
<dbReference type="EMBL" id="Z49460">
    <property type="protein sequence ID" value="CAA89480.1"/>
    <property type="molecule type" value="Genomic_DNA"/>
</dbReference>
<dbReference type="EMBL" id="AY558308">
    <property type="protein sequence ID" value="AAS56634.1"/>
    <property type="molecule type" value="Genomic_DNA"/>
</dbReference>
<dbReference type="EMBL" id="BK006943">
    <property type="protein sequence ID" value="DAA08621.1"/>
    <property type="molecule type" value="Genomic_DNA"/>
</dbReference>
<dbReference type="PIR" id="S56968">
    <property type="entry name" value="S56968"/>
</dbReference>
<dbReference type="RefSeq" id="NP_012350.1">
    <property type="nucleotide sequence ID" value="NM_001181618.1"/>
</dbReference>
<dbReference type="SMR" id="P46983"/>
<dbReference type="BioGRID" id="33577">
    <property type="interactions" value="41"/>
</dbReference>
<dbReference type="DIP" id="DIP-1561N"/>
<dbReference type="FunCoup" id="P46983">
    <property type="interactions" value="43"/>
</dbReference>
<dbReference type="IntAct" id="P46983">
    <property type="interactions" value="5"/>
</dbReference>
<dbReference type="MINT" id="P46983"/>
<dbReference type="STRING" id="4932.YJL185C"/>
<dbReference type="iPTMnet" id="P46983"/>
<dbReference type="PaxDb" id="4932-YJL185C"/>
<dbReference type="PeptideAtlas" id="P46983"/>
<dbReference type="EnsemblFungi" id="YJL185C_mRNA">
    <property type="protein sequence ID" value="YJL185C"/>
    <property type="gene ID" value="YJL185C"/>
</dbReference>
<dbReference type="GeneID" id="853254"/>
<dbReference type="KEGG" id="sce:YJL185C"/>
<dbReference type="AGR" id="SGD:S000003721"/>
<dbReference type="SGD" id="S000003721">
    <property type="gene designation" value="ATG36"/>
</dbReference>
<dbReference type="VEuPathDB" id="FungiDB:YJL185C"/>
<dbReference type="eggNOG" id="ENOG502SEYA">
    <property type="taxonomic scope" value="Eukaryota"/>
</dbReference>
<dbReference type="HOGENOM" id="CLU_085157_0_0_1"/>
<dbReference type="InParanoid" id="P46983"/>
<dbReference type="OMA" id="HHERIFD"/>
<dbReference type="OrthoDB" id="4066250at2759"/>
<dbReference type="BioCyc" id="YEAST:G3O-31619-MONOMER"/>
<dbReference type="BioGRID-ORCS" id="853254">
    <property type="hits" value="1 hit in 10 CRISPR screens"/>
</dbReference>
<dbReference type="PRO" id="PR:P46983"/>
<dbReference type="Proteomes" id="UP000002311">
    <property type="component" value="Chromosome X"/>
</dbReference>
<dbReference type="RNAct" id="P46983">
    <property type="molecule type" value="protein"/>
</dbReference>
<dbReference type="GO" id="GO:0005777">
    <property type="term" value="C:peroxisome"/>
    <property type="evidence" value="ECO:0000314"/>
    <property type="project" value="SGD"/>
</dbReference>
<dbReference type="GO" id="GO:0000423">
    <property type="term" value="P:mitophagy"/>
    <property type="evidence" value="ECO:0000315"/>
    <property type="project" value="SGD"/>
</dbReference>
<dbReference type="GO" id="GO:0000425">
    <property type="term" value="P:pexophagy"/>
    <property type="evidence" value="ECO:0000315"/>
    <property type="project" value="SGD"/>
</dbReference>
<sequence>MASVNNYQVDCGSRSARIQPRINNGIHDEESLFEVLELSEEEFELDFHRLKSFNDVRVINNPDLSPECTNTAISRDETLESASSAFEVPSDEIAILSISSDSNKNSPPSEQPAPALRNIRSSSNSDRIDEWCLGSHLFNELHQNVPQSSDGVNHGFPVYSFKERELYTSAKLKKLTNAQRIAVQKLSRDLYPILRTCYREKTRRQLLTYHHERIFDDIPSFFPQRDFIFNYYSMPLEFDRLSDVDIDSSSRSRFTDESTGETLNRSPSAASSSLENTSWFGWTLLSRFLDREW</sequence>
<reference key="1">
    <citation type="journal article" date="1996" name="EMBO J.">
        <title>Complete nucleotide sequence of Saccharomyces cerevisiae chromosome X.</title>
        <authorList>
            <person name="Galibert F."/>
            <person name="Alexandraki D."/>
            <person name="Baur A."/>
            <person name="Boles E."/>
            <person name="Chalwatzis N."/>
            <person name="Chuat J.-C."/>
            <person name="Coster F."/>
            <person name="Cziepluch C."/>
            <person name="de Haan M."/>
            <person name="Domdey H."/>
            <person name="Durand P."/>
            <person name="Entian K.-D."/>
            <person name="Gatius M."/>
            <person name="Goffeau A."/>
            <person name="Grivell L.A."/>
            <person name="Hennemann A."/>
            <person name="Herbert C.J."/>
            <person name="Heumann K."/>
            <person name="Hilger F."/>
            <person name="Hollenberg C.P."/>
            <person name="Huang M.-E."/>
            <person name="Jacq C."/>
            <person name="Jauniaux J.-C."/>
            <person name="Katsoulou C."/>
            <person name="Kirchrath L."/>
            <person name="Kleine K."/>
            <person name="Kordes E."/>
            <person name="Koetter P."/>
            <person name="Liebl S."/>
            <person name="Louis E.J."/>
            <person name="Manus V."/>
            <person name="Mewes H.-W."/>
            <person name="Miosga T."/>
            <person name="Obermaier B."/>
            <person name="Perea J."/>
            <person name="Pohl T.M."/>
            <person name="Portetelle D."/>
            <person name="Pujol A."/>
            <person name="Purnelle B."/>
            <person name="Ramezani Rad M."/>
            <person name="Rasmussen S.W."/>
            <person name="Rose M."/>
            <person name="Rossau R."/>
            <person name="Schaaff-Gerstenschlaeger I."/>
            <person name="Smits P.H.M."/>
            <person name="Scarcez T."/>
            <person name="Soriano N."/>
            <person name="To Van D."/>
            <person name="Tzermia M."/>
            <person name="Van Broekhoven A."/>
            <person name="Vandenbol M."/>
            <person name="Wedler H."/>
            <person name="von Wettstein D."/>
            <person name="Wambutt R."/>
            <person name="Zagulski M."/>
            <person name="Zollner A."/>
            <person name="Karpfinger-Hartl L."/>
        </authorList>
    </citation>
    <scope>NUCLEOTIDE SEQUENCE [LARGE SCALE GENOMIC DNA]</scope>
    <source>
        <strain>ATCC 204508 / S288c</strain>
    </source>
</reference>
<reference key="2">
    <citation type="journal article" date="2014" name="G3 (Bethesda)">
        <title>The reference genome sequence of Saccharomyces cerevisiae: Then and now.</title>
        <authorList>
            <person name="Engel S.R."/>
            <person name="Dietrich F.S."/>
            <person name="Fisk D.G."/>
            <person name="Binkley G."/>
            <person name="Balakrishnan R."/>
            <person name="Costanzo M.C."/>
            <person name="Dwight S.S."/>
            <person name="Hitz B.C."/>
            <person name="Karra K."/>
            <person name="Nash R.S."/>
            <person name="Weng S."/>
            <person name="Wong E.D."/>
            <person name="Lloyd P."/>
            <person name="Skrzypek M.S."/>
            <person name="Miyasato S.R."/>
            <person name="Simison M."/>
            <person name="Cherry J.M."/>
        </authorList>
    </citation>
    <scope>GENOME REANNOTATION</scope>
    <source>
        <strain>ATCC 204508 / S288c</strain>
    </source>
</reference>
<reference key="3">
    <citation type="journal article" date="2007" name="Genome Res.">
        <title>Approaching a complete repository of sequence-verified protein-encoding clones for Saccharomyces cerevisiae.</title>
        <authorList>
            <person name="Hu Y."/>
            <person name="Rolfs A."/>
            <person name="Bhullar B."/>
            <person name="Murthy T.V.S."/>
            <person name="Zhu C."/>
            <person name="Berger M.F."/>
            <person name="Camargo A.A."/>
            <person name="Kelley F."/>
            <person name="McCarron S."/>
            <person name="Jepson D."/>
            <person name="Richardson A."/>
            <person name="Raphael J."/>
            <person name="Moreira D."/>
            <person name="Taycher E."/>
            <person name="Zuo D."/>
            <person name="Mohr S."/>
            <person name="Kane M.F."/>
            <person name="Williamson J."/>
            <person name="Simpson A.J.G."/>
            <person name="Bulyk M.L."/>
            <person name="Harlow E."/>
            <person name="Marsischky G."/>
            <person name="Kolodner R.D."/>
            <person name="LaBaer J."/>
        </authorList>
    </citation>
    <scope>NUCLEOTIDE SEQUENCE [GENOMIC DNA]</scope>
    <source>
        <strain>ATCC 204508 / S288c</strain>
    </source>
</reference>
<reference key="4">
    <citation type="journal article" date="2006" name="Acta Biochim. Pol.">
        <title>The YJL185C, YLR376C and YJR129C genes of Saccharomyces cerevisiae are probably involved in regulation of the glyoxylate cycle.</title>
        <authorList>
            <person name="Boniewska-Bernacka E."/>
            <person name="Wysocki R."/>
            <person name="Grochowalska R."/>
            <person name="Machnicka B."/>
            <person name="Ulaszewski S."/>
            <person name="Lachowicz T."/>
        </authorList>
    </citation>
    <scope>FUNCTION</scope>
</reference>
<reference key="5">
    <citation type="journal article" date="2012" name="EMBO J.">
        <title>Pex3-anchored Atg36 tags peroxisomes for degradation in Saccharomyces cerevisiae.</title>
        <authorList>
            <person name="Motley A.M."/>
            <person name="Nuttall J.M."/>
            <person name="Hettema E.H."/>
        </authorList>
    </citation>
    <scope>FUNCTION</scope>
    <scope>SUBCELLULAR LOCATION</scope>
    <scope>INTERACTION WITH PEX3; ATG8 AND ATG11</scope>
</reference>
<name>ATG36_YEAST</name>